<proteinExistence type="inferred from homology"/>
<comment type="similarity">
    <text evidence="1">Belongs to the universal ribosomal protein uS9 family.</text>
</comment>
<dbReference type="EMBL" id="CU928161">
    <property type="protein sequence ID" value="CAR04832.1"/>
    <property type="molecule type" value="Genomic_DNA"/>
</dbReference>
<dbReference type="RefSeq" id="WP_000829818.1">
    <property type="nucleotide sequence ID" value="NC_011742.1"/>
</dbReference>
<dbReference type="EMDB" id="EMD-7014"/>
<dbReference type="EMDB" id="EMD-7015"/>
<dbReference type="EMDB" id="EMD-7016"/>
<dbReference type="EMDB" id="EMD-7970"/>
<dbReference type="EMDB" id="EMD-8621"/>
<dbReference type="EMDB" id="EMD-8826"/>
<dbReference type="EMDB" id="EMD-8829"/>
<dbReference type="SMR" id="B7MBZ1"/>
<dbReference type="IntAct" id="B7MBZ1">
    <property type="interactions" value="1"/>
</dbReference>
<dbReference type="GeneID" id="98390344"/>
<dbReference type="KEGG" id="ecz:ECS88_3606"/>
<dbReference type="HOGENOM" id="CLU_046483_2_1_6"/>
<dbReference type="Proteomes" id="UP000000747">
    <property type="component" value="Chromosome"/>
</dbReference>
<dbReference type="GO" id="GO:0022627">
    <property type="term" value="C:cytosolic small ribosomal subunit"/>
    <property type="evidence" value="ECO:0007669"/>
    <property type="project" value="TreeGrafter"/>
</dbReference>
<dbReference type="GO" id="GO:0003723">
    <property type="term" value="F:RNA binding"/>
    <property type="evidence" value="ECO:0007669"/>
    <property type="project" value="TreeGrafter"/>
</dbReference>
<dbReference type="GO" id="GO:0003735">
    <property type="term" value="F:structural constituent of ribosome"/>
    <property type="evidence" value="ECO:0007669"/>
    <property type="project" value="InterPro"/>
</dbReference>
<dbReference type="GO" id="GO:0006412">
    <property type="term" value="P:translation"/>
    <property type="evidence" value="ECO:0007669"/>
    <property type="project" value="UniProtKB-UniRule"/>
</dbReference>
<dbReference type="FunFam" id="3.30.230.10:FF:000001">
    <property type="entry name" value="30S ribosomal protein S9"/>
    <property type="match status" value="1"/>
</dbReference>
<dbReference type="Gene3D" id="3.30.230.10">
    <property type="match status" value="1"/>
</dbReference>
<dbReference type="HAMAP" id="MF_00532_B">
    <property type="entry name" value="Ribosomal_uS9_B"/>
    <property type="match status" value="1"/>
</dbReference>
<dbReference type="InterPro" id="IPR020568">
    <property type="entry name" value="Ribosomal_Su5_D2-typ_SF"/>
</dbReference>
<dbReference type="InterPro" id="IPR000754">
    <property type="entry name" value="Ribosomal_uS9"/>
</dbReference>
<dbReference type="InterPro" id="IPR023035">
    <property type="entry name" value="Ribosomal_uS9_bac/plastid"/>
</dbReference>
<dbReference type="InterPro" id="IPR020574">
    <property type="entry name" value="Ribosomal_uS9_CS"/>
</dbReference>
<dbReference type="InterPro" id="IPR014721">
    <property type="entry name" value="Ribsml_uS5_D2-typ_fold_subgr"/>
</dbReference>
<dbReference type="NCBIfam" id="NF001099">
    <property type="entry name" value="PRK00132.1"/>
    <property type="match status" value="1"/>
</dbReference>
<dbReference type="PANTHER" id="PTHR21569">
    <property type="entry name" value="RIBOSOMAL PROTEIN S9"/>
    <property type="match status" value="1"/>
</dbReference>
<dbReference type="PANTHER" id="PTHR21569:SF1">
    <property type="entry name" value="SMALL RIBOSOMAL SUBUNIT PROTEIN US9M"/>
    <property type="match status" value="1"/>
</dbReference>
<dbReference type="Pfam" id="PF00380">
    <property type="entry name" value="Ribosomal_S9"/>
    <property type="match status" value="1"/>
</dbReference>
<dbReference type="SUPFAM" id="SSF54211">
    <property type="entry name" value="Ribosomal protein S5 domain 2-like"/>
    <property type="match status" value="1"/>
</dbReference>
<dbReference type="PROSITE" id="PS00360">
    <property type="entry name" value="RIBOSOMAL_S9"/>
    <property type="match status" value="1"/>
</dbReference>
<keyword id="KW-1185">Reference proteome</keyword>
<keyword id="KW-0687">Ribonucleoprotein</keyword>
<keyword id="KW-0689">Ribosomal protein</keyword>
<organism>
    <name type="scientific">Escherichia coli O45:K1 (strain S88 / ExPEC)</name>
    <dbReference type="NCBI Taxonomy" id="585035"/>
    <lineage>
        <taxon>Bacteria</taxon>
        <taxon>Pseudomonadati</taxon>
        <taxon>Pseudomonadota</taxon>
        <taxon>Gammaproteobacteria</taxon>
        <taxon>Enterobacterales</taxon>
        <taxon>Enterobacteriaceae</taxon>
        <taxon>Escherichia</taxon>
    </lineage>
</organism>
<evidence type="ECO:0000255" key="1">
    <source>
        <dbReference type="HAMAP-Rule" id="MF_00532"/>
    </source>
</evidence>
<evidence type="ECO:0000305" key="2"/>
<gene>
    <name evidence="1" type="primary">rpsI</name>
    <name type="ordered locus">ECS88_3606</name>
</gene>
<sequence>MAENQYYGTGRRKSSAARVFIKPGNGKIVINQRSLEQYFGRETARMVVRQPLELVDMVEKLDLYITVKGGGISGQAGAIRHGITRALMEYDESLRSELRKAGFVTRDARQVERKKVGLRKARRRPQFSKR</sequence>
<reference key="1">
    <citation type="journal article" date="2009" name="PLoS Genet.">
        <title>Organised genome dynamics in the Escherichia coli species results in highly diverse adaptive paths.</title>
        <authorList>
            <person name="Touchon M."/>
            <person name="Hoede C."/>
            <person name="Tenaillon O."/>
            <person name="Barbe V."/>
            <person name="Baeriswyl S."/>
            <person name="Bidet P."/>
            <person name="Bingen E."/>
            <person name="Bonacorsi S."/>
            <person name="Bouchier C."/>
            <person name="Bouvet O."/>
            <person name="Calteau A."/>
            <person name="Chiapello H."/>
            <person name="Clermont O."/>
            <person name="Cruveiller S."/>
            <person name="Danchin A."/>
            <person name="Diard M."/>
            <person name="Dossat C."/>
            <person name="Karoui M.E."/>
            <person name="Frapy E."/>
            <person name="Garry L."/>
            <person name="Ghigo J.M."/>
            <person name="Gilles A.M."/>
            <person name="Johnson J."/>
            <person name="Le Bouguenec C."/>
            <person name="Lescat M."/>
            <person name="Mangenot S."/>
            <person name="Martinez-Jehanne V."/>
            <person name="Matic I."/>
            <person name="Nassif X."/>
            <person name="Oztas S."/>
            <person name="Petit M.A."/>
            <person name="Pichon C."/>
            <person name="Rouy Z."/>
            <person name="Ruf C.S."/>
            <person name="Schneider D."/>
            <person name="Tourret J."/>
            <person name="Vacherie B."/>
            <person name="Vallenet D."/>
            <person name="Medigue C."/>
            <person name="Rocha E.P.C."/>
            <person name="Denamur E."/>
        </authorList>
    </citation>
    <scope>NUCLEOTIDE SEQUENCE [LARGE SCALE GENOMIC DNA]</scope>
    <source>
        <strain>S88 / ExPEC</strain>
    </source>
</reference>
<accession>B7MBZ1</accession>
<name>RS9_ECO45</name>
<feature type="chain" id="PRO_1000128116" description="Small ribosomal subunit protein uS9">
    <location>
        <begin position="1"/>
        <end position="130"/>
    </location>
</feature>
<protein>
    <recommendedName>
        <fullName evidence="1">Small ribosomal subunit protein uS9</fullName>
    </recommendedName>
    <alternativeName>
        <fullName evidence="2">30S ribosomal protein S9</fullName>
    </alternativeName>
</protein>